<reference key="1">
    <citation type="journal article" date="2006" name="Science">
        <title>The genome of black cottonwood, Populus trichocarpa (Torr. &amp; Gray).</title>
        <authorList>
            <person name="Tuskan G.A."/>
            <person name="Difazio S."/>
            <person name="Jansson S."/>
            <person name="Bohlmann J."/>
            <person name="Grigoriev I."/>
            <person name="Hellsten U."/>
            <person name="Putnam N."/>
            <person name="Ralph S."/>
            <person name="Rombauts S."/>
            <person name="Salamov A."/>
            <person name="Schein J."/>
            <person name="Sterck L."/>
            <person name="Aerts A."/>
            <person name="Bhalerao R.R."/>
            <person name="Bhalerao R.P."/>
            <person name="Blaudez D."/>
            <person name="Boerjan W."/>
            <person name="Brun A."/>
            <person name="Brunner A."/>
            <person name="Busov V."/>
            <person name="Campbell M."/>
            <person name="Carlson J."/>
            <person name="Chalot M."/>
            <person name="Chapman J."/>
            <person name="Chen G.-L."/>
            <person name="Cooper D."/>
            <person name="Coutinho P.M."/>
            <person name="Couturier J."/>
            <person name="Covert S."/>
            <person name="Cronk Q."/>
            <person name="Cunningham R."/>
            <person name="Davis J."/>
            <person name="Degroeve S."/>
            <person name="Dejardin A."/>
            <person name="dePamphilis C.W."/>
            <person name="Detter J."/>
            <person name="Dirks B."/>
            <person name="Dubchak I."/>
            <person name="Duplessis S."/>
            <person name="Ehlting J."/>
            <person name="Ellis B."/>
            <person name="Gendler K."/>
            <person name="Goodstein D."/>
            <person name="Gribskov M."/>
            <person name="Grimwood J."/>
            <person name="Groover A."/>
            <person name="Gunter L."/>
            <person name="Hamberger B."/>
            <person name="Heinze B."/>
            <person name="Helariutta Y."/>
            <person name="Henrissat B."/>
            <person name="Holligan D."/>
            <person name="Holt R."/>
            <person name="Huang W."/>
            <person name="Islam-Faridi N."/>
            <person name="Jones S."/>
            <person name="Jones-Rhoades M."/>
            <person name="Jorgensen R."/>
            <person name="Joshi C."/>
            <person name="Kangasjaervi J."/>
            <person name="Karlsson J."/>
            <person name="Kelleher C."/>
            <person name="Kirkpatrick R."/>
            <person name="Kirst M."/>
            <person name="Kohler A."/>
            <person name="Kalluri U."/>
            <person name="Larimer F."/>
            <person name="Leebens-Mack J."/>
            <person name="Leple J.-C."/>
            <person name="Locascio P."/>
            <person name="Lou Y."/>
            <person name="Lucas S."/>
            <person name="Martin F."/>
            <person name="Montanini B."/>
            <person name="Napoli C."/>
            <person name="Nelson D.R."/>
            <person name="Nelson C."/>
            <person name="Nieminen K."/>
            <person name="Nilsson O."/>
            <person name="Pereda V."/>
            <person name="Peter G."/>
            <person name="Philippe R."/>
            <person name="Pilate G."/>
            <person name="Poliakov A."/>
            <person name="Razumovskaya J."/>
            <person name="Richardson P."/>
            <person name="Rinaldi C."/>
            <person name="Ritland K."/>
            <person name="Rouze P."/>
            <person name="Ryaboy D."/>
            <person name="Schmutz J."/>
            <person name="Schrader J."/>
            <person name="Segerman B."/>
            <person name="Shin H."/>
            <person name="Siddiqui A."/>
            <person name="Sterky F."/>
            <person name="Terry A."/>
            <person name="Tsai C.-J."/>
            <person name="Uberbacher E."/>
            <person name="Unneberg P."/>
            <person name="Vahala J."/>
            <person name="Wall K."/>
            <person name="Wessler S."/>
            <person name="Yang G."/>
            <person name="Yin T."/>
            <person name="Douglas C."/>
            <person name="Marra M."/>
            <person name="Sandberg G."/>
            <person name="Van de Peer Y."/>
            <person name="Rokhsar D.S."/>
        </authorList>
    </citation>
    <scope>NUCLEOTIDE SEQUENCE [LARGE SCALE GENOMIC DNA]</scope>
    <source>
        <strain>cv. Nisqually</strain>
    </source>
</reference>
<reference key="2">
    <citation type="submission" date="2008-12" db="EMBL/GenBank/DDBJ databases">
        <authorList>
            <consortium name="US DOE Joint Genome Institute (JGI-PGF)"/>
            <person name="Grigoriev I.V."/>
            <person name="Terry A."/>
            <person name="Salamov A.A."/>
            <person name="Otillar R."/>
            <person name="Lou Y."/>
            <person name="Lucas S."/>
            <person name="Hammon N."/>
            <person name="Glavina del Rio T."/>
            <person name="Detter J."/>
            <person name="Kalin E."/>
            <person name="Tice H."/>
            <person name="Pitluck S."/>
            <person name="Chapman J."/>
            <person name="Putnam N.H."/>
            <person name="Brunner A."/>
            <person name="Busov V."/>
            <person name="Campbell M."/>
            <person name="Chalot M."/>
            <person name="Covert S."/>
            <person name="Davis J."/>
            <person name="DiFazio S."/>
            <person name="Gribskov M."/>
            <person name="Gunter L."/>
            <person name="Hamberger B."/>
            <person name="Jansson S."/>
            <person name="Joshi C."/>
            <person name="Larimer F."/>
            <person name="Martin F."/>
            <person name="Napoli C."/>
            <person name="Nelson D."/>
            <person name="Ralph S."/>
            <person name="Rombauts S."/>
            <person name="Rouze P."/>
            <person name="Schrader J."/>
            <person name="Tsai C."/>
            <person name="Vahala J."/>
            <person name="Tuskan G."/>
            <person name="Rokhsar D."/>
        </authorList>
    </citation>
    <scope>GENOME REANNOTATION</scope>
    <source>
        <strain>cv. Nisqually</strain>
    </source>
</reference>
<accession>B9HSR7</accession>
<evidence type="ECO:0000255" key="1">
    <source>
        <dbReference type="HAMAP-Rule" id="MF_03139"/>
    </source>
</evidence>
<keyword id="KW-0456">Lyase</keyword>
<keyword id="KW-1185">Reference proteome</keyword>
<name>CYNS_POPTR</name>
<protein>
    <recommendedName>
        <fullName evidence="1">Cyanate hydratase</fullName>
        <shortName evidence="1">Cyanase</shortName>
        <ecNumber evidence="1">4.2.1.104</ecNumber>
    </recommendedName>
    <alternativeName>
        <fullName evidence="1">Cyanate hydrolase</fullName>
    </alternativeName>
    <alternativeName>
        <fullName evidence="1">Cyanate lyase</fullName>
    </alternativeName>
</protein>
<sequence length="162" mass="18415">MEDNKTTIINRLEAVKRNSGKSCSQIAEQTGLTNVYVAQLLRRQAQLNPDTAPSLRAALPELPEDLLQEMMRPPMRSYDPNLIQEPCVYRLNEAVMHFGESIKEIINEEFGDGIMSAIDFYCSVDKVKGVDGKDRVVVTFDGKYLPYTEQKSEHMVSRPRPH</sequence>
<organism>
    <name type="scientific">Populus trichocarpa</name>
    <name type="common">Western balsam poplar</name>
    <name type="synonym">Populus balsamifera subsp. trichocarpa</name>
    <dbReference type="NCBI Taxonomy" id="3694"/>
    <lineage>
        <taxon>Eukaryota</taxon>
        <taxon>Viridiplantae</taxon>
        <taxon>Streptophyta</taxon>
        <taxon>Embryophyta</taxon>
        <taxon>Tracheophyta</taxon>
        <taxon>Spermatophyta</taxon>
        <taxon>Magnoliopsida</taxon>
        <taxon>eudicotyledons</taxon>
        <taxon>Gunneridae</taxon>
        <taxon>Pentapetalae</taxon>
        <taxon>rosids</taxon>
        <taxon>fabids</taxon>
        <taxon>Malpighiales</taxon>
        <taxon>Salicaceae</taxon>
        <taxon>Saliceae</taxon>
        <taxon>Populus</taxon>
    </lineage>
</organism>
<comment type="function">
    <text evidence="1">Catalyzes the reaction of cyanate with bicarbonate to produce ammonia and carbon dioxide.</text>
</comment>
<comment type="catalytic activity">
    <reaction evidence="1">
        <text>cyanate + hydrogencarbonate + 3 H(+) = NH4(+) + 2 CO2</text>
        <dbReference type="Rhea" id="RHEA:11120"/>
        <dbReference type="ChEBI" id="CHEBI:15378"/>
        <dbReference type="ChEBI" id="CHEBI:16526"/>
        <dbReference type="ChEBI" id="CHEBI:17544"/>
        <dbReference type="ChEBI" id="CHEBI:28938"/>
        <dbReference type="ChEBI" id="CHEBI:29195"/>
        <dbReference type="EC" id="4.2.1.104"/>
    </reaction>
</comment>
<comment type="similarity">
    <text evidence="1">Belongs to the cyanase family.</text>
</comment>
<proteinExistence type="inferred from homology"/>
<dbReference type="EC" id="4.2.1.104" evidence="1"/>
<dbReference type="EMBL" id="CM009299">
    <property type="protein sequence ID" value="EEF01749.1"/>
    <property type="molecule type" value="Genomic_DNA"/>
</dbReference>
<dbReference type="RefSeq" id="XP_002315578.1">
    <property type="nucleotide sequence ID" value="XM_002315542.2"/>
</dbReference>
<dbReference type="SMR" id="B9HSR7"/>
<dbReference type="FunCoup" id="B9HSR7">
    <property type="interactions" value="1478"/>
</dbReference>
<dbReference type="STRING" id="3694.B9HSR7"/>
<dbReference type="EnsemblPlants" id="Potri.010G068200.1.v4.1">
    <property type="protein sequence ID" value="Potri.010G068200.1.v4.1"/>
    <property type="gene ID" value="Potri.010G068200.v4.1"/>
</dbReference>
<dbReference type="GeneID" id="7459980"/>
<dbReference type="Gramene" id="Potri.010G068200.1.v4.1">
    <property type="protein sequence ID" value="Potri.010G068200.1.v4.1"/>
    <property type="gene ID" value="Potri.010G068200.v4.1"/>
</dbReference>
<dbReference type="KEGG" id="pop:7459980"/>
<dbReference type="eggNOG" id="ENOG502RY7W">
    <property type="taxonomic scope" value="Eukaryota"/>
</dbReference>
<dbReference type="HOGENOM" id="CLU_103452_2_0_1"/>
<dbReference type="InParanoid" id="B9HSR7"/>
<dbReference type="OMA" id="YELVMIN"/>
<dbReference type="OrthoDB" id="10019422at2759"/>
<dbReference type="Proteomes" id="UP000006729">
    <property type="component" value="Chromosome 10"/>
</dbReference>
<dbReference type="ExpressionAtlas" id="B9HSR7">
    <property type="expression patterns" value="baseline and differential"/>
</dbReference>
<dbReference type="GO" id="GO:0008824">
    <property type="term" value="F:cyanate hydratase activity"/>
    <property type="evidence" value="ECO:0007669"/>
    <property type="project" value="UniProtKB-UniRule"/>
</dbReference>
<dbReference type="GO" id="GO:0003677">
    <property type="term" value="F:DNA binding"/>
    <property type="evidence" value="ECO:0007669"/>
    <property type="project" value="InterPro"/>
</dbReference>
<dbReference type="GO" id="GO:0042802">
    <property type="term" value="F:identical protein binding"/>
    <property type="evidence" value="ECO:0007669"/>
    <property type="project" value="EnsemblPlants"/>
</dbReference>
<dbReference type="GO" id="GO:0009440">
    <property type="term" value="P:cyanate catabolic process"/>
    <property type="evidence" value="ECO:0007669"/>
    <property type="project" value="EnsemblPlants"/>
</dbReference>
<dbReference type="GO" id="GO:0009651">
    <property type="term" value="P:response to salt stress"/>
    <property type="evidence" value="ECO:0007669"/>
    <property type="project" value="EnsemblPlants"/>
</dbReference>
<dbReference type="CDD" id="cd00559">
    <property type="entry name" value="Cyanase_C"/>
    <property type="match status" value="1"/>
</dbReference>
<dbReference type="FunFam" id="3.30.1160.10:FF:000002">
    <property type="entry name" value="Cyanate hydratase"/>
    <property type="match status" value="1"/>
</dbReference>
<dbReference type="Gene3D" id="3.30.1160.10">
    <property type="entry name" value="Cyanate lyase, C-terminal domain"/>
    <property type="match status" value="1"/>
</dbReference>
<dbReference type="Gene3D" id="1.10.260.40">
    <property type="entry name" value="lambda repressor-like DNA-binding domains"/>
    <property type="match status" value="1"/>
</dbReference>
<dbReference type="HAMAP" id="MF_00535">
    <property type="entry name" value="Cyanate_hydrat"/>
    <property type="match status" value="1"/>
</dbReference>
<dbReference type="InterPro" id="IPR008076">
    <property type="entry name" value="Cyanase"/>
</dbReference>
<dbReference type="InterPro" id="IPR003712">
    <property type="entry name" value="Cyanate_lyase_C"/>
</dbReference>
<dbReference type="InterPro" id="IPR036581">
    <property type="entry name" value="Cyanate_lyase_C_sf"/>
</dbReference>
<dbReference type="InterPro" id="IPR010982">
    <property type="entry name" value="Lambda_DNA-bd_dom_sf"/>
</dbReference>
<dbReference type="NCBIfam" id="TIGR00673">
    <property type="entry name" value="cynS"/>
    <property type="match status" value="1"/>
</dbReference>
<dbReference type="PANTHER" id="PTHR34186">
    <property type="entry name" value="CYANATE HYDRATASE"/>
    <property type="match status" value="1"/>
</dbReference>
<dbReference type="PANTHER" id="PTHR34186:SF2">
    <property type="entry name" value="CYANATE HYDRATASE"/>
    <property type="match status" value="1"/>
</dbReference>
<dbReference type="Pfam" id="PF02560">
    <property type="entry name" value="Cyanate_lyase"/>
    <property type="match status" value="1"/>
</dbReference>
<dbReference type="PIRSF" id="PIRSF001263">
    <property type="entry name" value="Cyanate_hydratas"/>
    <property type="match status" value="1"/>
</dbReference>
<dbReference type="PRINTS" id="PR01693">
    <property type="entry name" value="CYANASE"/>
</dbReference>
<dbReference type="SMART" id="SM01116">
    <property type="entry name" value="Cyanate_lyase"/>
    <property type="match status" value="1"/>
</dbReference>
<dbReference type="SUPFAM" id="SSF55234">
    <property type="entry name" value="Cyanase C-terminal domain"/>
    <property type="match status" value="1"/>
</dbReference>
<dbReference type="SUPFAM" id="SSF47413">
    <property type="entry name" value="lambda repressor-like DNA-binding domains"/>
    <property type="match status" value="1"/>
</dbReference>
<gene>
    <name evidence="1" type="primary">CYN</name>
    <name type="ORF">POPTRDRAFT_833411</name>
</gene>
<feature type="chain" id="PRO_0000403227" description="Cyanate hydratase">
    <location>
        <begin position="1"/>
        <end position="162"/>
    </location>
</feature>
<feature type="active site" evidence="1">
    <location>
        <position position="90"/>
    </location>
</feature>
<feature type="active site" evidence="1">
    <location>
        <position position="93"/>
    </location>
</feature>
<feature type="active site" evidence="1">
    <location>
        <position position="116"/>
    </location>
</feature>